<comment type="function">
    <text>Part of the binding-protein-dependent transport system for branched-chain amino acids. Probably responsible for the translocation of the substrates across the membrane.</text>
</comment>
<comment type="subcellular location">
    <subcellularLocation>
        <location>Cell inner membrane</location>
        <topology>Multi-pass membrane protein</topology>
    </subcellularLocation>
</comment>
<comment type="similarity">
    <text evidence="2">Belongs to the binding-protein-dependent transport system permease family. LivHM subfamily.</text>
</comment>
<accession>P0A2J1</accession>
<accession>P30295</accession>
<sequence>MSEQFLYFLQQMFNGVTLGSTYALIAIGYTMVYGIIGMINFAHGEVYMIGSYVSFMIIAALMMMGIDTSWLLVAAGFIGAIIIASAYGWSIERVAYRPVRNSKRLIALISAIGMSIFLQNYVSLTEGSRDVALPSLFNGQWIVGSSENFSASITTMQAVIWIVTFLAMLALTIFIRYSRMGRACRACAEDLKMASLLGINTDRVIALTFVIGAAMAAVAGVLLGQFYGVINPYIGFMAGMKAFTAAVLGGIGSIPGAMIGGLILGVAEALSSAYLSTEYKDVVSFALLILVLLVMPTGILGRPEVEKV</sequence>
<protein>
    <recommendedName>
        <fullName>High-affinity branched-chain amino acid transport system permease protein LivH</fullName>
    </recommendedName>
    <alternativeName>
        <fullName>LIV-I protein H</fullName>
    </alternativeName>
</protein>
<name>LIVH_SALTY</name>
<organism>
    <name type="scientific">Salmonella typhimurium (strain LT2 / SGSC1412 / ATCC 700720)</name>
    <dbReference type="NCBI Taxonomy" id="99287"/>
    <lineage>
        <taxon>Bacteria</taxon>
        <taxon>Pseudomonadati</taxon>
        <taxon>Pseudomonadota</taxon>
        <taxon>Gammaproteobacteria</taxon>
        <taxon>Enterobacterales</taxon>
        <taxon>Enterobacteriaceae</taxon>
        <taxon>Salmonella</taxon>
    </lineage>
</organism>
<dbReference type="EMBL" id="D12589">
    <property type="protein sequence ID" value="BAA02129.1"/>
    <property type="molecule type" value="Genomic_DNA"/>
</dbReference>
<dbReference type="EMBL" id="AE006468">
    <property type="protein sequence ID" value="AAL22423.1"/>
    <property type="molecule type" value="Genomic_DNA"/>
</dbReference>
<dbReference type="PIR" id="JH0668">
    <property type="entry name" value="JH0668"/>
</dbReference>
<dbReference type="RefSeq" id="NP_462464.1">
    <property type="nucleotide sequence ID" value="NC_003197.2"/>
</dbReference>
<dbReference type="RefSeq" id="WP_000003007.1">
    <property type="nucleotide sequence ID" value="NC_003197.2"/>
</dbReference>
<dbReference type="STRING" id="99287.STM3563"/>
<dbReference type="PaxDb" id="99287-STM3563"/>
<dbReference type="GeneID" id="1255086"/>
<dbReference type="KEGG" id="stm:STM3563"/>
<dbReference type="PATRIC" id="fig|99287.12.peg.3766"/>
<dbReference type="HOGENOM" id="CLU_039929_3_1_6"/>
<dbReference type="OMA" id="NMGWFLI"/>
<dbReference type="PhylomeDB" id="P0A2J1"/>
<dbReference type="BioCyc" id="SENT99287:STM3563-MONOMER"/>
<dbReference type="Proteomes" id="UP000001014">
    <property type="component" value="Chromosome"/>
</dbReference>
<dbReference type="GO" id="GO:0005886">
    <property type="term" value="C:plasma membrane"/>
    <property type="evidence" value="ECO:0000318"/>
    <property type="project" value="GO_Central"/>
</dbReference>
<dbReference type="GO" id="GO:0015188">
    <property type="term" value="F:L-isoleucine transmembrane transporter activity"/>
    <property type="evidence" value="ECO:0000318"/>
    <property type="project" value="GO_Central"/>
</dbReference>
<dbReference type="GO" id="GO:0015190">
    <property type="term" value="F:L-leucine transmembrane transporter activity"/>
    <property type="evidence" value="ECO:0000318"/>
    <property type="project" value="GO_Central"/>
</dbReference>
<dbReference type="GO" id="GO:0015192">
    <property type="term" value="F:L-phenylalanine transmembrane transporter activity"/>
    <property type="evidence" value="ECO:0000318"/>
    <property type="project" value="GO_Central"/>
</dbReference>
<dbReference type="GO" id="GO:0005304">
    <property type="term" value="F:L-valine transmembrane transporter activity"/>
    <property type="evidence" value="ECO:0000318"/>
    <property type="project" value="GO_Central"/>
</dbReference>
<dbReference type="GO" id="GO:0042941">
    <property type="term" value="P:D-alanine transmembrane transport"/>
    <property type="evidence" value="ECO:0000318"/>
    <property type="project" value="GO_Central"/>
</dbReference>
<dbReference type="GO" id="GO:0015808">
    <property type="term" value="P:L-alanine transport"/>
    <property type="evidence" value="ECO:0000318"/>
    <property type="project" value="GO_Central"/>
</dbReference>
<dbReference type="GO" id="GO:1903806">
    <property type="term" value="P:L-isoleucine import across plasma membrane"/>
    <property type="evidence" value="ECO:0000318"/>
    <property type="project" value="GO_Central"/>
</dbReference>
<dbReference type="GO" id="GO:1903801">
    <property type="term" value="P:L-leucine import across plasma membrane"/>
    <property type="evidence" value="ECO:0000318"/>
    <property type="project" value="GO_Central"/>
</dbReference>
<dbReference type="GO" id="GO:1903785">
    <property type="term" value="P:L-valine transmembrane transport"/>
    <property type="evidence" value="ECO:0000318"/>
    <property type="project" value="GO_Central"/>
</dbReference>
<dbReference type="GO" id="GO:0015823">
    <property type="term" value="P:phenylalanine transport"/>
    <property type="evidence" value="ECO:0000318"/>
    <property type="project" value="GO_Central"/>
</dbReference>
<dbReference type="CDD" id="cd06582">
    <property type="entry name" value="TM_PBP1_LivH_like"/>
    <property type="match status" value="1"/>
</dbReference>
<dbReference type="InterPro" id="IPR001851">
    <property type="entry name" value="ABC_transp_permease"/>
</dbReference>
<dbReference type="InterPro" id="IPR052157">
    <property type="entry name" value="BCAA_transport_permease"/>
</dbReference>
<dbReference type="NCBIfam" id="NF008011">
    <property type="entry name" value="PRK10740.1"/>
    <property type="match status" value="1"/>
</dbReference>
<dbReference type="PANTHER" id="PTHR11795">
    <property type="entry name" value="BRANCHED-CHAIN AMINO ACID TRANSPORT SYSTEM PERMEASE PROTEIN LIVH"/>
    <property type="match status" value="1"/>
</dbReference>
<dbReference type="PANTHER" id="PTHR11795:SF371">
    <property type="entry name" value="HIGH-AFFINITY BRANCHED-CHAIN AMINO ACID TRANSPORT SYSTEM PERMEASE PROTEIN LIVH"/>
    <property type="match status" value="1"/>
</dbReference>
<dbReference type="Pfam" id="PF02653">
    <property type="entry name" value="BPD_transp_2"/>
    <property type="match status" value="1"/>
</dbReference>
<keyword id="KW-0029">Amino-acid transport</keyword>
<keyword id="KW-0997">Cell inner membrane</keyword>
<keyword id="KW-1003">Cell membrane</keyword>
<keyword id="KW-0472">Membrane</keyword>
<keyword id="KW-1185">Reference proteome</keyword>
<keyword id="KW-0812">Transmembrane</keyword>
<keyword id="KW-1133">Transmembrane helix</keyword>
<keyword id="KW-0813">Transport</keyword>
<feature type="chain" id="PRO_0000060061" description="High-affinity branched-chain amino acid transport system permease protein LivH">
    <location>
        <begin position="1"/>
        <end position="308"/>
    </location>
</feature>
<feature type="topological domain" description="Cytoplasmic" evidence="1">
    <location>
        <begin position="1"/>
        <end position="21"/>
    </location>
</feature>
<feature type="transmembrane region" description="Helical" evidence="1">
    <location>
        <begin position="22"/>
        <end position="42"/>
    </location>
</feature>
<feature type="topological domain" description="Periplasmic" evidence="1">
    <location>
        <begin position="43"/>
        <end position="45"/>
    </location>
</feature>
<feature type="transmembrane region" description="Helical" evidence="1">
    <location>
        <begin position="46"/>
        <end position="66"/>
    </location>
</feature>
<feature type="topological domain" description="Cytoplasmic" evidence="1">
    <location>
        <begin position="67"/>
        <end position="70"/>
    </location>
</feature>
<feature type="transmembrane region" description="Helical" evidence="1">
    <location>
        <begin position="71"/>
        <end position="91"/>
    </location>
</feature>
<feature type="topological domain" description="Periplasmic" evidence="1">
    <location>
        <begin position="92"/>
        <end position="104"/>
    </location>
</feature>
<feature type="transmembrane region" description="Helical" evidence="1">
    <location>
        <begin position="105"/>
        <end position="125"/>
    </location>
</feature>
<feature type="topological domain" description="Cytoplasmic" evidence="1">
    <location>
        <begin position="126"/>
        <end position="154"/>
    </location>
</feature>
<feature type="transmembrane region" description="Helical" evidence="1">
    <location>
        <begin position="155"/>
        <end position="175"/>
    </location>
</feature>
<feature type="topological domain" description="Periplasmic" evidence="1">
    <location>
        <begin position="176"/>
        <end position="203"/>
    </location>
</feature>
<feature type="transmembrane region" description="Helical" evidence="1">
    <location>
        <begin position="204"/>
        <end position="224"/>
    </location>
</feature>
<feature type="topological domain" description="Cytoplasmic" evidence="1">
    <location>
        <begin position="225"/>
        <end position="246"/>
    </location>
</feature>
<feature type="transmembrane region" description="Helical" evidence="1">
    <location>
        <begin position="247"/>
        <end position="266"/>
    </location>
</feature>
<feature type="topological domain" description="Periplasmic" evidence="1">
    <location>
        <begin position="267"/>
        <end position="280"/>
    </location>
</feature>
<feature type="transmembrane region" description="Helical" evidence="1">
    <location>
        <begin position="281"/>
        <end position="301"/>
    </location>
</feature>
<feature type="topological domain" description="Cytoplasmic" evidence="1">
    <location>
        <begin position="302"/>
        <end position="308"/>
    </location>
</feature>
<evidence type="ECO:0000255" key="1"/>
<evidence type="ECO:0000305" key="2"/>
<reference key="1">
    <citation type="journal article" date="1992" name="J. Biochem.">
        <title>Nucleotide sequences and characterization of liv genes encoding components of the high-affinity branched-chain amino acid transport system in Salmonella typhimurium.</title>
        <authorList>
            <person name="Matsubara K."/>
            <person name="Ohnishi K."/>
            <person name="Kiritani K."/>
        </authorList>
    </citation>
    <scope>NUCLEOTIDE SEQUENCE [GENOMIC DNA]</scope>
    <source>
        <strain>LT2</strain>
    </source>
</reference>
<reference key="2">
    <citation type="journal article" date="2001" name="Nature">
        <title>Complete genome sequence of Salmonella enterica serovar Typhimurium LT2.</title>
        <authorList>
            <person name="McClelland M."/>
            <person name="Sanderson K.E."/>
            <person name="Spieth J."/>
            <person name="Clifton S.W."/>
            <person name="Latreille P."/>
            <person name="Courtney L."/>
            <person name="Porwollik S."/>
            <person name="Ali J."/>
            <person name="Dante M."/>
            <person name="Du F."/>
            <person name="Hou S."/>
            <person name="Layman D."/>
            <person name="Leonard S."/>
            <person name="Nguyen C."/>
            <person name="Scott K."/>
            <person name="Holmes A."/>
            <person name="Grewal N."/>
            <person name="Mulvaney E."/>
            <person name="Ryan E."/>
            <person name="Sun H."/>
            <person name="Florea L."/>
            <person name="Miller W."/>
            <person name="Stoneking T."/>
            <person name="Nhan M."/>
            <person name="Waterston R."/>
            <person name="Wilson R.K."/>
        </authorList>
    </citation>
    <scope>NUCLEOTIDE SEQUENCE [LARGE SCALE GENOMIC DNA]</scope>
    <source>
        <strain>LT2 / SGSC1412 / ATCC 700720</strain>
    </source>
</reference>
<proteinExistence type="inferred from homology"/>
<gene>
    <name type="primary">livH</name>
    <name type="synonym">livA</name>
    <name type="ordered locus">STM3563</name>
</gene>